<reference key="1">
    <citation type="journal article" date="1999" name="J. Biol. Chem.">
        <title>Molecular characterization of the genes of actinomycin synthetase I and of a 4-methyl-3-hydroxyanthranilic acid carrier protein involved in the assembly of the acylpeptide chain of actinomycin in Streptomyces.</title>
        <authorList>
            <person name="Pfennig F."/>
            <person name="Schauwecker F."/>
            <person name="Keller U."/>
        </authorList>
    </citation>
    <scope>NUCLEOTIDE SEQUENCE [GENOMIC DNA]</scope>
    <scope>FUNCTION</scope>
    <scope>PATHWAY</scope>
    <source>
        <strain>ATCC 11523 / DSM 40128 / JCM 4296 / LMG 20459 / NBRC 15393</strain>
    </source>
</reference>
<reference key="2">
    <citation type="journal article" date="2010" name="J. Bacteriol.">
        <title>The actinomycin biosynthetic gene cluster of Streptomyces chrysomallus: a genetic hall of mirrors for synthesis of a molecule with mirror symmetry.</title>
        <authorList>
            <person name="Keller U."/>
            <person name="Lang M."/>
            <person name="Crnovcic I."/>
            <person name="Pfennig F."/>
            <person name="Schauwecker F."/>
        </authorList>
    </citation>
    <scope>NUCLEOTIDE SEQUENCE [GENOMIC DNA]</scope>
    <source>
        <strain>ATCC 11523 / DSM 40128 / JCM 4296 / LMG 20459 / NBRC 15393</strain>
    </source>
</reference>
<accession>D6R237</accession>
<sequence length="78" mass="8691">MISKDDIRAILAEGTDLGPPEQFPDDADVVMDSFTLIVLQHGLEERHGVVIDPHFEDMEQFTSIDGIHAYLTALPAER</sequence>
<comment type="function">
    <text evidence="3">Involved in the biosynthesis of actinomycin (PubMed:10212227). Acts as a carrier in the transfer and thioesterification of 4-methyl-3-hydroxyanthranilic acid (4-MHA) (PubMed:10212227).</text>
</comment>
<comment type="pathway">
    <text evidence="3">Antibiotic biosynthesis.</text>
</comment>
<comment type="PTM">
    <text evidence="2">4'-phosphopantetheine is transferred from CoA to a specific serine of the apo-form of this carrier protein.</text>
</comment>
<comment type="similarity">
    <text evidence="5">Belongs to the acyl carrier protein (ACP) family.</text>
</comment>
<gene>
    <name evidence="4" type="primary">acmD</name>
</gene>
<protein>
    <recommendedName>
        <fullName evidence="4">4-methyl-3-hydroxyanthranilic acid carrier protein</fullName>
        <shortName evidence="4">4-MHA carrier protein</shortName>
    </recommendedName>
    <alternativeName>
        <fullName evidence="4">Acm acyl carrier protein</fullName>
        <shortName evidence="4">AcmACP</shortName>
    </alternativeName>
</protein>
<proteinExistence type="inferred from homology"/>
<keyword id="KW-0045">Antibiotic biosynthesis</keyword>
<keyword id="KW-0596">Phosphopantetheine</keyword>
<keyword id="KW-0597">Phosphoprotein</keyword>
<organism>
    <name type="scientific">Streptomyces anulatus</name>
    <name type="common">Streptomyces chrysomallus</name>
    <dbReference type="NCBI Taxonomy" id="1892"/>
    <lineage>
        <taxon>Bacteria</taxon>
        <taxon>Bacillati</taxon>
        <taxon>Actinomycetota</taxon>
        <taxon>Actinomycetes</taxon>
        <taxon>Kitasatosporales</taxon>
        <taxon>Streptomycetaceae</taxon>
        <taxon>Streptomyces</taxon>
    </lineage>
</organism>
<evidence type="ECO:0000250" key="1">
    <source>
        <dbReference type="UniProtKB" id="P80643"/>
    </source>
</evidence>
<evidence type="ECO:0000250" key="2">
    <source>
        <dbReference type="UniProtKB" id="Q89VT6"/>
    </source>
</evidence>
<evidence type="ECO:0000269" key="3">
    <source>
    </source>
</evidence>
<evidence type="ECO:0000303" key="4">
    <source>
    </source>
</evidence>
<evidence type="ECO:0000305" key="5"/>
<name>ACMD_STRAQ</name>
<feature type="chain" id="PRO_0000453572" description="4-methyl-3-hydroxyanthranilic acid carrier protein">
    <location>
        <begin position="1"/>
        <end position="78"/>
    </location>
</feature>
<feature type="modified residue" description="O-(pantetheine 4'-phosphoryl)serine" evidence="1">
    <location>
        <position position="33"/>
    </location>
</feature>
<dbReference type="EMBL" id="HM038106">
    <property type="protein sequence ID" value="ADG27356.1"/>
    <property type="molecule type" value="Genomic_DNA"/>
</dbReference>
<dbReference type="SMR" id="D6R237"/>
<dbReference type="BioCyc" id="MetaCyc:MONOMER-19507"/>
<dbReference type="GO" id="GO:0017000">
    <property type="term" value="P:antibiotic biosynthetic process"/>
    <property type="evidence" value="ECO:0007669"/>
    <property type="project" value="UniProtKB-KW"/>
</dbReference>
<dbReference type="Gene3D" id="1.10.1200.10">
    <property type="entry name" value="ACP-like"/>
    <property type="match status" value="1"/>
</dbReference>
<dbReference type="InterPro" id="IPR036736">
    <property type="entry name" value="ACP-like_sf"/>
</dbReference>
<dbReference type="SUPFAM" id="SSF47336">
    <property type="entry name" value="ACP-like"/>
    <property type="match status" value="1"/>
</dbReference>